<reference key="1">
    <citation type="journal article" date="2013" name="PLoS ONE">
        <title>SjAPI, the first functionally characterized Ascaris-type protease inhibitor from animal venoms.</title>
        <authorList>
            <person name="Chen Z."/>
            <person name="Wang B."/>
            <person name="Hu J."/>
            <person name="Yang W."/>
            <person name="Cao Z."/>
            <person name="Zhuo R."/>
            <person name="Li W."/>
            <person name="Wu Y."/>
        </authorList>
    </citation>
    <scope>NUCLEOTIDE SEQUENCE [MRNA]</scope>
    <source>
        <tissue>Venom gland</tissue>
    </source>
</reference>
<dbReference type="SMR" id="P0DM57"/>
<dbReference type="GO" id="GO:0005576">
    <property type="term" value="C:extracellular region"/>
    <property type="evidence" value="ECO:0007669"/>
    <property type="project" value="UniProtKB-SubCell"/>
</dbReference>
<dbReference type="GO" id="GO:0004867">
    <property type="term" value="F:serine-type endopeptidase inhibitor activity"/>
    <property type="evidence" value="ECO:0007669"/>
    <property type="project" value="UniProtKB-KW"/>
</dbReference>
<dbReference type="CDD" id="cd19941">
    <property type="entry name" value="TIL"/>
    <property type="match status" value="1"/>
</dbReference>
<dbReference type="Gene3D" id="2.10.25.10">
    <property type="entry name" value="Laminin"/>
    <property type="match status" value="1"/>
</dbReference>
<dbReference type="InterPro" id="IPR036084">
    <property type="entry name" value="Ser_inhib-like_sf"/>
</dbReference>
<dbReference type="InterPro" id="IPR002919">
    <property type="entry name" value="TIL_dom"/>
</dbReference>
<dbReference type="Pfam" id="PF01826">
    <property type="entry name" value="TIL"/>
    <property type="match status" value="1"/>
</dbReference>
<dbReference type="SUPFAM" id="SSF57567">
    <property type="entry name" value="Serine protease inhibitors"/>
    <property type="match status" value="1"/>
</dbReference>
<protein>
    <recommendedName>
        <fullName evidence="4">Venom peptide CtAPI</fullName>
    </recommendedName>
    <alternativeName>
        <fullName evidence="5">Ascaris-type protease inhibitor</fullName>
    </alternativeName>
</protein>
<name>TILI_CHATC</name>
<sequence>QPNLWRCEKDEEFVNCAPRCPQNCRNIRSYQPCLVLTPVCAPGCVCRSGKVKNDRGDCVSITDCFK</sequence>
<keyword id="KW-1015">Disulfide bond</keyword>
<keyword id="KW-0646">Protease inhibitor</keyword>
<keyword id="KW-0964">Secreted</keyword>
<keyword id="KW-0722">Serine protease inhibitor</keyword>
<proteinExistence type="inferred from homology"/>
<evidence type="ECO:0000250" key="1"/>
<evidence type="ECO:0000250" key="2">
    <source>
        <dbReference type="UniProtKB" id="P07851"/>
    </source>
</evidence>
<evidence type="ECO:0000255" key="3"/>
<evidence type="ECO:0000303" key="4">
    <source>
    </source>
</evidence>
<evidence type="ECO:0000305" key="5"/>
<evidence type="ECO:0000305" key="6">
    <source>
    </source>
</evidence>
<feature type="chain" id="PRO_0000423044" description="Venom peptide CtAPI" evidence="6">
    <location>
        <begin position="1"/>
        <end position="66"/>
    </location>
</feature>
<feature type="domain" description="TIL" evidence="3">
    <location>
        <begin position="7"/>
        <end position="64"/>
    </location>
</feature>
<feature type="disulfide bond" evidence="2">
    <location>
        <begin position="7"/>
        <end position="44"/>
    </location>
</feature>
<feature type="disulfide bond" evidence="2">
    <location>
        <begin position="16"/>
        <end position="40"/>
    </location>
</feature>
<feature type="disulfide bond" evidence="2">
    <location>
        <begin position="20"/>
        <end position="33"/>
    </location>
</feature>
<feature type="disulfide bond" evidence="2">
    <location>
        <begin position="24"/>
        <end position="64"/>
    </location>
</feature>
<feature type="disulfide bond" evidence="2">
    <location>
        <begin position="46"/>
        <end position="58"/>
    </location>
</feature>
<accession>P0DM57</accession>
<comment type="function">
    <text evidence="1">Serine protease inhibitor.</text>
</comment>
<comment type="subcellular location">
    <subcellularLocation>
        <location evidence="6">Secreted</location>
    </subcellularLocation>
</comment>
<comment type="tissue specificity">
    <text evidence="6">Expressed by the venom gland.</text>
</comment>
<comment type="similarity">
    <text evidence="5">Belongs to the serine protease inhibitor-like (TIL domain-containing) family.</text>
</comment>
<organism>
    <name type="scientific">Chaerilus tricostatus</name>
    <name type="common">Scorpion</name>
    <dbReference type="NCBI Taxonomy" id="1055734"/>
    <lineage>
        <taxon>Eukaryota</taxon>
        <taxon>Metazoa</taxon>
        <taxon>Ecdysozoa</taxon>
        <taxon>Arthropoda</taxon>
        <taxon>Chelicerata</taxon>
        <taxon>Arachnida</taxon>
        <taxon>Scorpiones</taxon>
        <taxon>Chaerilida</taxon>
        <taxon>Chaeriloidea</taxon>
        <taxon>Chaerilidae</taxon>
        <taxon>Chaerilus</taxon>
    </lineage>
</organism>